<geneLocation type="plasmid">
    <name>pTiA6</name>
</geneLocation>
<accession>Q44433</accession>
<organism>
    <name type="scientific">Rhizobium radiobacter</name>
    <name type="common">Agrobacterium tumefaciens</name>
    <name type="synonym">Agrobacterium radiobacter</name>
    <dbReference type="NCBI Taxonomy" id="358"/>
    <lineage>
        <taxon>Bacteria</taxon>
        <taxon>Pseudomonadati</taxon>
        <taxon>Pseudomonadota</taxon>
        <taxon>Alphaproteobacteria</taxon>
        <taxon>Hyphomicrobiales</taxon>
        <taxon>Rhizobiaceae</taxon>
        <taxon>Rhizobium/Agrobacterium group</taxon>
        <taxon>Agrobacterium</taxon>
        <taxon>Agrobacterium tumefaciens complex</taxon>
    </lineage>
</organism>
<sequence>MKRISTILVGVFLATPVYAADNIHTLGTLSEIELALTAGKPVNVTVDLSLCNPGVADTPATKTRGGMRIDAYRITADGTLAFADQHFTIDRDGKPITQFIRYQIRSNGEADFTMVTFNMPTYERKGTSLAYKCAIDHGLSFRAPQ</sequence>
<dbReference type="EMBL" id="M19352">
    <property type="protein sequence ID" value="AAA82504.1"/>
    <property type="molecule type" value="Genomic_DNA"/>
</dbReference>
<dbReference type="RefSeq" id="NP_059796.1">
    <property type="nucleotide sequence ID" value="NC_002377.1"/>
</dbReference>
<dbReference type="RefSeq" id="WP_010892484.1">
    <property type="nucleotide sequence ID" value="NZ_QSNU01000012.1"/>
</dbReference>
<dbReference type="SMR" id="Q44433"/>
<dbReference type="OrthoDB" id="8251155at2"/>
<dbReference type="InterPro" id="IPR010694">
    <property type="entry name" value="Uncharacterised_VirK"/>
</dbReference>
<dbReference type="Pfam" id="PF06903">
    <property type="entry name" value="VirK"/>
    <property type="match status" value="1"/>
</dbReference>
<feature type="chain" id="PRO_0000197042" description="Uncharacterized protein in pinF2 3'region">
    <location>
        <begin position="1"/>
        <end position="145"/>
    </location>
</feature>
<keyword id="KW-0614">Plasmid</keyword>
<proteinExistence type="predicted"/>
<name>YPI2_RHIRD</name>
<protein>
    <recommendedName>
        <fullName>Uncharacterized protein in pinF2 3'region</fullName>
    </recommendedName>
    <alternativeName>
        <fullName>ORF2</fullName>
    </alternativeName>
</protein>
<reference key="1">
    <citation type="journal article" date="1989" name="J. Bacteriol.">
        <title>Nucleotide sequence and analysis of the plant-inducible locus pinF from Agrobacterium tumefaciens.</title>
        <authorList>
            <person name="Kanemoto R.H."/>
            <person name="Powell A.T."/>
            <person name="Akiyoshi D.E."/>
            <person name="Regier D.A."/>
            <person name="Kerstetter R.A."/>
            <person name="Nester E.W."/>
            <person name="Hawes M.C."/>
            <person name="Gordon M.P."/>
        </authorList>
    </citation>
    <scope>NUCLEOTIDE SEQUENCE [GENOMIC DNA]</scope>
</reference>